<feature type="chain" id="PRO_1000198057" description="Phosphomethylpyrimidine synthase">
    <location>
        <begin position="1"/>
        <end position="631"/>
    </location>
</feature>
<feature type="binding site" evidence="1">
    <location>
        <position position="239"/>
    </location>
    <ligand>
        <name>substrate</name>
    </ligand>
</feature>
<feature type="binding site" evidence="1">
    <location>
        <position position="268"/>
    </location>
    <ligand>
        <name>substrate</name>
    </ligand>
</feature>
<feature type="binding site" evidence="1">
    <location>
        <position position="297"/>
    </location>
    <ligand>
        <name>substrate</name>
    </ligand>
</feature>
<feature type="binding site" evidence="1">
    <location>
        <position position="333"/>
    </location>
    <ligand>
        <name>substrate</name>
    </ligand>
</feature>
<feature type="binding site" evidence="1">
    <location>
        <begin position="353"/>
        <end position="355"/>
    </location>
    <ligand>
        <name>substrate</name>
    </ligand>
</feature>
<feature type="binding site" evidence="1">
    <location>
        <begin position="394"/>
        <end position="397"/>
    </location>
    <ligand>
        <name>substrate</name>
    </ligand>
</feature>
<feature type="binding site" evidence="1">
    <location>
        <position position="433"/>
    </location>
    <ligand>
        <name>substrate</name>
    </ligand>
</feature>
<feature type="binding site" evidence="1">
    <location>
        <position position="437"/>
    </location>
    <ligand>
        <name>Zn(2+)</name>
        <dbReference type="ChEBI" id="CHEBI:29105"/>
    </ligand>
</feature>
<feature type="binding site" evidence="1">
    <location>
        <position position="460"/>
    </location>
    <ligand>
        <name>substrate</name>
    </ligand>
</feature>
<feature type="binding site" evidence="1">
    <location>
        <position position="501"/>
    </location>
    <ligand>
        <name>Zn(2+)</name>
        <dbReference type="ChEBI" id="CHEBI:29105"/>
    </ligand>
</feature>
<feature type="binding site" evidence="1">
    <location>
        <position position="581"/>
    </location>
    <ligand>
        <name>[4Fe-4S] cluster</name>
        <dbReference type="ChEBI" id="CHEBI:49883"/>
        <note>4Fe-4S-S-AdoMet</note>
    </ligand>
</feature>
<feature type="binding site" evidence="1">
    <location>
        <position position="584"/>
    </location>
    <ligand>
        <name>[4Fe-4S] cluster</name>
        <dbReference type="ChEBI" id="CHEBI:49883"/>
        <note>4Fe-4S-S-AdoMet</note>
    </ligand>
</feature>
<feature type="binding site" evidence="1">
    <location>
        <position position="589"/>
    </location>
    <ligand>
        <name>[4Fe-4S] cluster</name>
        <dbReference type="ChEBI" id="CHEBI:49883"/>
        <note>4Fe-4S-S-AdoMet</note>
    </ligand>
</feature>
<keyword id="KW-0004">4Fe-4S</keyword>
<keyword id="KW-0408">Iron</keyword>
<keyword id="KW-0411">Iron-sulfur</keyword>
<keyword id="KW-0456">Lyase</keyword>
<keyword id="KW-0479">Metal-binding</keyword>
<keyword id="KW-0949">S-adenosyl-L-methionine</keyword>
<keyword id="KW-0784">Thiamine biosynthesis</keyword>
<keyword id="KW-0862">Zinc</keyword>
<dbReference type="EC" id="4.1.99.17" evidence="1"/>
<dbReference type="EMBL" id="CU928160">
    <property type="protein sequence ID" value="CAR00968.1"/>
    <property type="molecule type" value="Genomic_DNA"/>
</dbReference>
<dbReference type="RefSeq" id="WP_001276926.1">
    <property type="nucleotide sequence ID" value="NC_011741.1"/>
</dbReference>
<dbReference type="SMR" id="B7M7Q3"/>
<dbReference type="GeneID" id="75205512"/>
<dbReference type="KEGG" id="ecr:ECIAI1_4209"/>
<dbReference type="HOGENOM" id="CLU_013181_2_1_6"/>
<dbReference type="UniPathway" id="UPA00060"/>
<dbReference type="GO" id="GO:0005829">
    <property type="term" value="C:cytosol"/>
    <property type="evidence" value="ECO:0007669"/>
    <property type="project" value="TreeGrafter"/>
</dbReference>
<dbReference type="GO" id="GO:0051539">
    <property type="term" value="F:4 iron, 4 sulfur cluster binding"/>
    <property type="evidence" value="ECO:0007669"/>
    <property type="project" value="UniProtKB-KW"/>
</dbReference>
<dbReference type="GO" id="GO:0016830">
    <property type="term" value="F:carbon-carbon lyase activity"/>
    <property type="evidence" value="ECO:0007669"/>
    <property type="project" value="InterPro"/>
</dbReference>
<dbReference type="GO" id="GO:0008270">
    <property type="term" value="F:zinc ion binding"/>
    <property type="evidence" value="ECO:0007669"/>
    <property type="project" value="UniProtKB-UniRule"/>
</dbReference>
<dbReference type="GO" id="GO:0009228">
    <property type="term" value="P:thiamine biosynthetic process"/>
    <property type="evidence" value="ECO:0007669"/>
    <property type="project" value="UniProtKB-KW"/>
</dbReference>
<dbReference type="GO" id="GO:0009229">
    <property type="term" value="P:thiamine diphosphate biosynthetic process"/>
    <property type="evidence" value="ECO:0007669"/>
    <property type="project" value="UniProtKB-UniRule"/>
</dbReference>
<dbReference type="FunFam" id="3.20.20.540:FF:000001">
    <property type="entry name" value="Phosphomethylpyrimidine synthase"/>
    <property type="match status" value="1"/>
</dbReference>
<dbReference type="Gene3D" id="6.10.250.620">
    <property type="match status" value="1"/>
</dbReference>
<dbReference type="Gene3D" id="3.20.20.540">
    <property type="entry name" value="Radical SAM ThiC family, central domain"/>
    <property type="match status" value="1"/>
</dbReference>
<dbReference type="HAMAP" id="MF_00089">
    <property type="entry name" value="ThiC"/>
    <property type="match status" value="1"/>
</dbReference>
<dbReference type="InterPro" id="IPR037509">
    <property type="entry name" value="ThiC"/>
</dbReference>
<dbReference type="InterPro" id="IPR025747">
    <property type="entry name" value="ThiC-associated_dom"/>
</dbReference>
<dbReference type="InterPro" id="IPR038521">
    <property type="entry name" value="ThiC/Bza_core_dom"/>
</dbReference>
<dbReference type="InterPro" id="IPR002817">
    <property type="entry name" value="ThiC/BzaA/B"/>
</dbReference>
<dbReference type="NCBIfam" id="NF006763">
    <property type="entry name" value="PRK09284.1"/>
    <property type="match status" value="1"/>
</dbReference>
<dbReference type="NCBIfam" id="NF009895">
    <property type="entry name" value="PRK13352.1"/>
    <property type="match status" value="1"/>
</dbReference>
<dbReference type="NCBIfam" id="TIGR00190">
    <property type="entry name" value="thiC"/>
    <property type="match status" value="1"/>
</dbReference>
<dbReference type="PANTHER" id="PTHR30557:SF1">
    <property type="entry name" value="PHOSPHOMETHYLPYRIMIDINE SYNTHASE, CHLOROPLASTIC"/>
    <property type="match status" value="1"/>
</dbReference>
<dbReference type="PANTHER" id="PTHR30557">
    <property type="entry name" value="THIAMINE BIOSYNTHESIS PROTEIN THIC"/>
    <property type="match status" value="1"/>
</dbReference>
<dbReference type="Pfam" id="PF13667">
    <property type="entry name" value="ThiC-associated"/>
    <property type="match status" value="1"/>
</dbReference>
<dbReference type="Pfam" id="PF01964">
    <property type="entry name" value="ThiC_Rad_SAM"/>
    <property type="match status" value="1"/>
</dbReference>
<dbReference type="SFLD" id="SFLDF00407">
    <property type="entry name" value="phosphomethylpyrimidine_syntha"/>
    <property type="match status" value="1"/>
</dbReference>
<dbReference type="SFLD" id="SFLDG01114">
    <property type="entry name" value="phosphomethylpyrimidine_syntha"/>
    <property type="match status" value="1"/>
</dbReference>
<dbReference type="SFLD" id="SFLDS00113">
    <property type="entry name" value="Radical_SAM_Phosphomethylpyrim"/>
    <property type="match status" value="1"/>
</dbReference>
<sequence>MSATKLTRREQRARAQHFIDTLEGTAFPNSKRIYITGTHPGVRVPMREIQLSPTLIGGSKEQPQYEENEAIPVYDTSGPYGDPQIAINVQQGLAKLRQPWIDARGDTEELTVRSSDYTKARLADDGLDELRFSGVLTPKRAKAGRRVTQLHYARQGIITPEMEFIAIRENMGRERIRSEVLRHQHPGMSFGAHLPENITAEFVRDEVAAGRAIIPANINHPESEPMIIGRNFLVKVNANIGNSAVTSSIEEEVEKLVWSTRWGADTVMDLSTGRYIHETREWILRNSPVPIGTVPIYQALEKVNGIAEDLTWEAFRDTLLEQAEQGVDYFTIHAGVLLRYVPMTAKRLTGIVSRGGSIMAKWCLSHHQENFLYQHFREICEICAAYDVSLSLGDGLRPGSIQDANDEAQFAELHTLGELTKIAWEYDVQVMIEGPGHVPMQMIRRNMTEELEHCHEAPFYTLGPLTTDIAPGYDHFTSGIGAAMIGWFGCAMLCYVTPKEHLGLPNKEDVKQGLITYKIAAHAADLAKGHPGAQIRDNAMSKARFEFRWEDQFNLALDPFTARAYHDETLPQESGKVAHFCSMCGPKFCSMKISQEVRDYAATQTIEMGMADMSENFRARGGEIYLRKEEA</sequence>
<evidence type="ECO:0000255" key="1">
    <source>
        <dbReference type="HAMAP-Rule" id="MF_00089"/>
    </source>
</evidence>
<comment type="function">
    <text evidence="1">Catalyzes the synthesis of the hydroxymethylpyrimidine phosphate (HMP-P) moiety of thiamine from aminoimidazole ribotide (AIR) in a radical S-adenosyl-L-methionine (SAM)-dependent reaction.</text>
</comment>
<comment type="catalytic activity">
    <reaction evidence="1">
        <text>5-amino-1-(5-phospho-beta-D-ribosyl)imidazole + S-adenosyl-L-methionine = 4-amino-2-methyl-5-(phosphooxymethyl)pyrimidine + CO + 5'-deoxyadenosine + formate + L-methionine + 3 H(+)</text>
        <dbReference type="Rhea" id="RHEA:24840"/>
        <dbReference type="ChEBI" id="CHEBI:15378"/>
        <dbReference type="ChEBI" id="CHEBI:15740"/>
        <dbReference type="ChEBI" id="CHEBI:17245"/>
        <dbReference type="ChEBI" id="CHEBI:17319"/>
        <dbReference type="ChEBI" id="CHEBI:57844"/>
        <dbReference type="ChEBI" id="CHEBI:58354"/>
        <dbReference type="ChEBI" id="CHEBI:59789"/>
        <dbReference type="ChEBI" id="CHEBI:137981"/>
        <dbReference type="EC" id="4.1.99.17"/>
    </reaction>
</comment>
<comment type="cofactor">
    <cofactor evidence="1">
        <name>[4Fe-4S] cluster</name>
        <dbReference type="ChEBI" id="CHEBI:49883"/>
    </cofactor>
    <text evidence="1">Binds 1 [4Fe-4S] cluster per subunit. The cluster is coordinated with 3 cysteines and an exchangeable S-adenosyl-L-methionine.</text>
</comment>
<comment type="pathway">
    <text evidence="1">Cofactor biosynthesis; thiamine diphosphate biosynthesis.</text>
</comment>
<comment type="subunit">
    <text evidence="1">Homodimer.</text>
</comment>
<comment type="similarity">
    <text evidence="1">Belongs to the ThiC family.</text>
</comment>
<gene>
    <name evidence="1" type="primary">thiC</name>
    <name type="ordered locus">ECIAI1_4209</name>
</gene>
<accession>B7M7Q3</accession>
<name>THIC_ECO8A</name>
<proteinExistence type="inferred from homology"/>
<protein>
    <recommendedName>
        <fullName evidence="1">Phosphomethylpyrimidine synthase</fullName>
        <ecNumber evidence="1">4.1.99.17</ecNumber>
    </recommendedName>
    <alternativeName>
        <fullName evidence="1">Hydroxymethylpyrimidine phosphate synthase</fullName>
        <shortName evidence="1">HMP-P synthase</shortName>
        <shortName evidence="1">HMP-phosphate synthase</shortName>
        <shortName evidence="1">HMPP synthase</shortName>
    </alternativeName>
    <alternativeName>
        <fullName evidence="1">Thiamine biosynthesis protein ThiC</fullName>
    </alternativeName>
</protein>
<organism>
    <name type="scientific">Escherichia coli O8 (strain IAI1)</name>
    <dbReference type="NCBI Taxonomy" id="585034"/>
    <lineage>
        <taxon>Bacteria</taxon>
        <taxon>Pseudomonadati</taxon>
        <taxon>Pseudomonadota</taxon>
        <taxon>Gammaproteobacteria</taxon>
        <taxon>Enterobacterales</taxon>
        <taxon>Enterobacteriaceae</taxon>
        <taxon>Escherichia</taxon>
    </lineage>
</organism>
<reference key="1">
    <citation type="journal article" date="2009" name="PLoS Genet.">
        <title>Organised genome dynamics in the Escherichia coli species results in highly diverse adaptive paths.</title>
        <authorList>
            <person name="Touchon M."/>
            <person name="Hoede C."/>
            <person name="Tenaillon O."/>
            <person name="Barbe V."/>
            <person name="Baeriswyl S."/>
            <person name="Bidet P."/>
            <person name="Bingen E."/>
            <person name="Bonacorsi S."/>
            <person name="Bouchier C."/>
            <person name="Bouvet O."/>
            <person name="Calteau A."/>
            <person name="Chiapello H."/>
            <person name="Clermont O."/>
            <person name="Cruveiller S."/>
            <person name="Danchin A."/>
            <person name="Diard M."/>
            <person name="Dossat C."/>
            <person name="Karoui M.E."/>
            <person name="Frapy E."/>
            <person name="Garry L."/>
            <person name="Ghigo J.M."/>
            <person name="Gilles A.M."/>
            <person name="Johnson J."/>
            <person name="Le Bouguenec C."/>
            <person name="Lescat M."/>
            <person name="Mangenot S."/>
            <person name="Martinez-Jehanne V."/>
            <person name="Matic I."/>
            <person name="Nassif X."/>
            <person name="Oztas S."/>
            <person name="Petit M.A."/>
            <person name="Pichon C."/>
            <person name="Rouy Z."/>
            <person name="Ruf C.S."/>
            <person name="Schneider D."/>
            <person name="Tourret J."/>
            <person name="Vacherie B."/>
            <person name="Vallenet D."/>
            <person name="Medigue C."/>
            <person name="Rocha E.P.C."/>
            <person name="Denamur E."/>
        </authorList>
    </citation>
    <scope>NUCLEOTIDE SEQUENCE [LARGE SCALE GENOMIC DNA]</scope>
    <source>
        <strain>IAI1</strain>
    </source>
</reference>